<keyword id="KW-0963">Cytoplasm</keyword>
<keyword id="KW-0328">Glycosyltransferase</keyword>
<keyword id="KW-0660">Purine salvage</keyword>
<keyword id="KW-1185">Reference proteome</keyword>
<keyword id="KW-0808">Transferase</keyword>
<organism>
    <name type="scientific">Chromobacterium violaceum (strain ATCC 12472 / DSM 30191 / JCM 1249 / CCUG 213 / NBRC 12614 / NCIMB 9131 / NCTC 9757 / MK)</name>
    <dbReference type="NCBI Taxonomy" id="243365"/>
    <lineage>
        <taxon>Bacteria</taxon>
        <taxon>Pseudomonadati</taxon>
        <taxon>Pseudomonadota</taxon>
        <taxon>Betaproteobacteria</taxon>
        <taxon>Neisseriales</taxon>
        <taxon>Chromobacteriaceae</taxon>
        <taxon>Chromobacterium</taxon>
    </lineage>
</organism>
<protein>
    <recommendedName>
        <fullName evidence="1">Adenine phosphoribosyltransferase</fullName>
        <shortName evidence="1">APRT</shortName>
        <ecNumber evidence="1">2.4.2.7</ecNumber>
    </recommendedName>
</protein>
<feature type="chain" id="PRO_0000149372" description="Adenine phosphoribosyltransferase">
    <location>
        <begin position="1"/>
        <end position="193"/>
    </location>
</feature>
<gene>
    <name evidence="1" type="primary">apt</name>
    <name type="ordered locus">CV_3772</name>
</gene>
<sequence length="193" mass="21627">MISKYNRPMENLSNLDYSSYLKGWIRTVPNWPQQGVMFRDITPLLQNPKTFRMLIDIYVHRYMMEKVDLVAGLDARGFIIGSVLAYELNVGFVPIRKKGKLPFTTVEEEYELEYGNAAVEMHTDACKPGDRVILIDDLVATGGTMMAGYKLLKRMGADVLEAAAIIELPELGGGQLVRDGGLDLFTVCSYEGH</sequence>
<accession>Q7NRK9</accession>
<dbReference type="EC" id="2.4.2.7" evidence="1"/>
<dbReference type="EMBL" id="AE016825">
    <property type="protein sequence ID" value="AAQ61434.1"/>
    <property type="molecule type" value="Genomic_DNA"/>
</dbReference>
<dbReference type="SMR" id="Q7NRK9"/>
<dbReference type="STRING" id="243365.CV_3772"/>
<dbReference type="KEGG" id="cvi:CV_3772"/>
<dbReference type="eggNOG" id="COG0503">
    <property type="taxonomic scope" value="Bacteria"/>
</dbReference>
<dbReference type="HOGENOM" id="CLU_063339_3_0_4"/>
<dbReference type="UniPathway" id="UPA00588">
    <property type="reaction ID" value="UER00646"/>
</dbReference>
<dbReference type="Proteomes" id="UP000001424">
    <property type="component" value="Chromosome"/>
</dbReference>
<dbReference type="GO" id="GO:0005737">
    <property type="term" value="C:cytoplasm"/>
    <property type="evidence" value="ECO:0007669"/>
    <property type="project" value="UniProtKB-SubCell"/>
</dbReference>
<dbReference type="GO" id="GO:0002055">
    <property type="term" value="F:adenine binding"/>
    <property type="evidence" value="ECO:0007669"/>
    <property type="project" value="TreeGrafter"/>
</dbReference>
<dbReference type="GO" id="GO:0003999">
    <property type="term" value="F:adenine phosphoribosyltransferase activity"/>
    <property type="evidence" value="ECO:0007669"/>
    <property type="project" value="UniProtKB-UniRule"/>
</dbReference>
<dbReference type="GO" id="GO:0016208">
    <property type="term" value="F:AMP binding"/>
    <property type="evidence" value="ECO:0007669"/>
    <property type="project" value="TreeGrafter"/>
</dbReference>
<dbReference type="GO" id="GO:0006168">
    <property type="term" value="P:adenine salvage"/>
    <property type="evidence" value="ECO:0007669"/>
    <property type="project" value="InterPro"/>
</dbReference>
<dbReference type="GO" id="GO:0044209">
    <property type="term" value="P:AMP salvage"/>
    <property type="evidence" value="ECO:0007669"/>
    <property type="project" value="UniProtKB-UniRule"/>
</dbReference>
<dbReference type="GO" id="GO:0006166">
    <property type="term" value="P:purine ribonucleoside salvage"/>
    <property type="evidence" value="ECO:0007669"/>
    <property type="project" value="UniProtKB-KW"/>
</dbReference>
<dbReference type="CDD" id="cd06223">
    <property type="entry name" value="PRTases_typeI"/>
    <property type="match status" value="1"/>
</dbReference>
<dbReference type="FunFam" id="3.40.50.2020:FF:000021">
    <property type="entry name" value="Adenine phosphoribosyltransferase"/>
    <property type="match status" value="1"/>
</dbReference>
<dbReference type="Gene3D" id="3.40.50.2020">
    <property type="match status" value="1"/>
</dbReference>
<dbReference type="HAMAP" id="MF_00004">
    <property type="entry name" value="Aden_phosphoribosyltr"/>
    <property type="match status" value="1"/>
</dbReference>
<dbReference type="InterPro" id="IPR005764">
    <property type="entry name" value="Ade_phspho_trans"/>
</dbReference>
<dbReference type="InterPro" id="IPR000836">
    <property type="entry name" value="PRibTrfase_dom"/>
</dbReference>
<dbReference type="InterPro" id="IPR029057">
    <property type="entry name" value="PRTase-like"/>
</dbReference>
<dbReference type="InterPro" id="IPR050054">
    <property type="entry name" value="UPRTase/APRTase"/>
</dbReference>
<dbReference type="NCBIfam" id="TIGR01090">
    <property type="entry name" value="apt"/>
    <property type="match status" value="1"/>
</dbReference>
<dbReference type="NCBIfam" id="NF002634">
    <property type="entry name" value="PRK02304.1-3"/>
    <property type="match status" value="1"/>
</dbReference>
<dbReference type="NCBIfam" id="NF002636">
    <property type="entry name" value="PRK02304.1-5"/>
    <property type="match status" value="1"/>
</dbReference>
<dbReference type="PANTHER" id="PTHR32315">
    <property type="entry name" value="ADENINE PHOSPHORIBOSYLTRANSFERASE"/>
    <property type="match status" value="1"/>
</dbReference>
<dbReference type="PANTHER" id="PTHR32315:SF3">
    <property type="entry name" value="ADENINE PHOSPHORIBOSYLTRANSFERASE"/>
    <property type="match status" value="1"/>
</dbReference>
<dbReference type="Pfam" id="PF00156">
    <property type="entry name" value="Pribosyltran"/>
    <property type="match status" value="1"/>
</dbReference>
<dbReference type="SUPFAM" id="SSF53271">
    <property type="entry name" value="PRTase-like"/>
    <property type="match status" value="1"/>
</dbReference>
<dbReference type="PROSITE" id="PS00103">
    <property type="entry name" value="PUR_PYR_PR_TRANSFER"/>
    <property type="match status" value="1"/>
</dbReference>
<evidence type="ECO:0000255" key="1">
    <source>
        <dbReference type="HAMAP-Rule" id="MF_00004"/>
    </source>
</evidence>
<reference key="1">
    <citation type="journal article" date="2003" name="Proc. Natl. Acad. Sci. U.S.A.">
        <title>The complete genome sequence of Chromobacterium violaceum reveals remarkable and exploitable bacterial adaptability.</title>
        <authorList>
            <person name="Vasconcelos A.T.R."/>
            <person name="de Almeida D.F."/>
            <person name="Hungria M."/>
            <person name="Guimaraes C.T."/>
            <person name="Antonio R.V."/>
            <person name="Almeida F.C."/>
            <person name="de Almeida L.G.P."/>
            <person name="de Almeida R."/>
            <person name="Alves-Gomes J.A."/>
            <person name="Andrade E.M."/>
            <person name="Araripe J."/>
            <person name="de Araujo M.F.F."/>
            <person name="Astolfi-Filho S."/>
            <person name="Azevedo V."/>
            <person name="Baptista A.J."/>
            <person name="Bataus L.A.M."/>
            <person name="Batista J.S."/>
            <person name="Belo A."/>
            <person name="van den Berg C."/>
            <person name="Bogo M."/>
            <person name="Bonatto S."/>
            <person name="Bordignon J."/>
            <person name="Brigido M.M."/>
            <person name="Brito C.A."/>
            <person name="Brocchi M."/>
            <person name="Burity H.A."/>
            <person name="Camargo A.A."/>
            <person name="Cardoso D.D.P."/>
            <person name="Carneiro N.P."/>
            <person name="Carraro D.M."/>
            <person name="Carvalho C.M.B."/>
            <person name="Cascardo J.C.M."/>
            <person name="Cavada B.S."/>
            <person name="Chueire L.M.O."/>
            <person name="Creczynski-Pasa T.B."/>
            <person name="Cunha-Junior N.C."/>
            <person name="Fagundes N."/>
            <person name="Falcao C.L."/>
            <person name="Fantinatti F."/>
            <person name="Farias I.P."/>
            <person name="Felipe M.S.S."/>
            <person name="Ferrari L.P."/>
            <person name="Ferro J.A."/>
            <person name="Ferro M.I.T."/>
            <person name="Franco G.R."/>
            <person name="Freitas N.S.A."/>
            <person name="Furlan L.R."/>
            <person name="Gazzinelli R.T."/>
            <person name="Gomes E.A."/>
            <person name="Goncalves P.R."/>
            <person name="Grangeiro T.B."/>
            <person name="Grattapaglia D."/>
            <person name="Grisard E.C."/>
            <person name="Hanna E.S."/>
            <person name="Jardim S.N."/>
            <person name="Laurino J."/>
            <person name="Leoi L.C.T."/>
            <person name="Lima L.F.A."/>
            <person name="Loureiro M.F."/>
            <person name="Lyra M.C.C.P."/>
            <person name="Madeira H.M.F."/>
            <person name="Manfio G.P."/>
            <person name="Maranhao A.Q."/>
            <person name="Martins W.S."/>
            <person name="di Mauro S.M.Z."/>
            <person name="de Medeiros S.R.B."/>
            <person name="Meissner R.V."/>
            <person name="Moreira M.A.M."/>
            <person name="Nascimento F.F."/>
            <person name="Nicolas M.F."/>
            <person name="Oliveira J.G."/>
            <person name="Oliveira S.C."/>
            <person name="Paixao R.F.C."/>
            <person name="Parente J.A."/>
            <person name="Pedrosa F.O."/>
            <person name="Pena S.D.J."/>
            <person name="Pereira J.O."/>
            <person name="Pereira M."/>
            <person name="Pinto L.S.R.C."/>
            <person name="Pinto L.S."/>
            <person name="Porto J.I.R."/>
            <person name="Potrich D.P."/>
            <person name="Ramalho-Neto C.E."/>
            <person name="Reis A.M.M."/>
            <person name="Rigo L.U."/>
            <person name="Rondinelli E."/>
            <person name="Santos E.B.P."/>
            <person name="Santos F.R."/>
            <person name="Schneider M.P.C."/>
            <person name="Seuanez H.N."/>
            <person name="Silva A.M.R."/>
            <person name="da Silva A.L.C."/>
            <person name="Silva D.W."/>
            <person name="Silva R."/>
            <person name="Simoes I.C."/>
            <person name="Simon D."/>
            <person name="Soares C.M.A."/>
            <person name="Soares R.B.A."/>
            <person name="Souza E.M."/>
            <person name="Souza K.R.L."/>
            <person name="Souza R.C."/>
            <person name="Steffens M.B.R."/>
            <person name="Steindel M."/>
            <person name="Teixeira S.R."/>
            <person name="Urmenyi T."/>
            <person name="Vettore A."/>
            <person name="Wassem R."/>
            <person name="Zaha A."/>
            <person name="Simpson A.J.G."/>
        </authorList>
    </citation>
    <scope>NUCLEOTIDE SEQUENCE [LARGE SCALE GENOMIC DNA]</scope>
    <source>
        <strain>ATCC 12472 / DSM 30191 / JCM 1249 / CCUG 213 / NBRC 12614 / NCIMB 9131 / NCTC 9757 / MK</strain>
    </source>
</reference>
<comment type="function">
    <text evidence="1">Catalyzes a salvage reaction resulting in the formation of AMP, that is energically less costly than de novo synthesis.</text>
</comment>
<comment type="catalytic activity">
    <reaction evidence="1">
        <text>AMP + diphosphate = 5-phospho-alpha-D-ribose 1-diphosphate + adenine</text>
        <dbReference type="Rhea" id="RHEA:16609"/>
        <dbReference type="ChEBI" id="CHEBI:16708"/>
        <dbReference type="ChEBI" id="CHEBI:33019"/>
        <dbReference type="ChEBI" id="CHEBI:58017"/>
        <dbReference type="ChEBI" id="CHEBI:456215"/>
        <dbReference type="EC" id="2.4.2.7"/>
    </reaction>
</comment>
<comment type="pathway">
    <text evidence="1">Purine metabolism; AMP biosynthesis via salvage pathway; AMP from adenine: step 1/1.</text>
</comment>
<comment type="subunit">
    <text evidence="1">Homodimer.</text>
</comment>
<comment type="subcellular location">
    <subcellularLocation>
        <location evidence="1">Cytoplasm</location>
    </subcellularLocation>
</comment>
<comment type="similarity">
    <text evidence="1">Belongs to the purine/pyrimidine phosphoribosyltransferase family.</text>
</comment>
<name>APT_CHRVO</name>
<proteinExistence type="inferred from homology"/>